<dbReference type="EMBL" id="CP000023">
    <property type="protein sequence ID" value="AAV60008.1"/>
    <property type="molecule type" value="Genomic_DNA"/>
</dbReference>
<dbReference type="RefSeq" id="WP_002889928.1">
    <property type="nucleotide sequence ID" value="NC_006448.1"/>
</dbReference>
<dbReference type="SMR" id="Q5M604"/>
<dbReference type="STRING" id="264199.stu0286"/>
<dbReference type="GeneID" id="93791475"/>
<dbReference type="KEGG" id="stl:stu0286"/>
<dbReference type="eggNOG" id="COG0378">
    <property type="taxonomic scope" value="Bacteria"/>
</dbReference>
<dbReference type="HOGENOM" id="CLU_072144_1_0_9"/>
<dbReference type="Proteomes" id="UP000001170">
    <property type="component" value="Chromosome"/>
</dbReference>
<dbReference type="GO" id="GO:0005737">
    <property type="term" value="C:cytoplasm"/>
    <property type="evidence" value="ECO:0007669"/>
    <property type="project" value="UniProtKB-SubCell"/>
</dbReference>
<dbReference type="GO" id="GO:0005525">
    <property type="term" value="F:GTP binding"/>
    <property type="evidence" value="ECO:0007669"/>
    <property type="project" value="UniProtKB-KW"/>
</dbReference>
<dbReference type="GO" id="GO:0003924">
    <property type="term" value="F:GTPase activity"/>
    <property type="evidence" value="ECO:0007669"/>
    <property type="project" value="InterPro"/>
</dbReference>
<dbReference type="GO" id="GO:0016151">
    <property type="term" value="F:nickel cation binding"/>
    <property type="evidence" value="ECO:0007669"/>
    <property type="project" value="UniProtKB-UniRule"/>
</dbReference>
<dbReference type="GO" id="GO:0043419">
    <property type="term" value="P:urea catabolic process"/>
    <property type="evidence" value="ECO:0007669"/>
    <property type="project" value="InterPro"/>
</dbReference>
<dbReference type="CDD" id="cd05540">
    <property type="entry name" value="UreG"/>
    <property type="match status" value="1"/>
</dbReference>
<dbReference type="Gene3D" id="3.40.50.300">
    <property type="entry name" value="P-loop containing nucleotide triphosphate hydrolases"/>
    <property type="match status" value="1"/>
</dbReference>
<dbReference type="HAMAP" id="MF_01389">
    <property type="entry name" value="UreG"/>
    <property type="match status" value="1"/>
</dbReference>
<dbReference type="InterPro" id="IPR003495">
    <property type="entry name" value="CobW/HypB/UreG_nucleotide-bd"/>
</dbReference>
<dbReference type="InterPro" id="IPR027417">
    <property type="entry name" value="P-loop_NTPase"/>
</dbReference>
<dbReference type="InterPro" id="IPR004400">
    <property type="entry name" value="UreG"/>
</dbReference>
<dbReference type="NCBIfam" id="TIGR00101">
    <property type="entry name" value="ureG"/>
    <property type="match status" value="1"/>
</dbReference>
<dbReference type="PANTHER" id="PTHR31715">
    <property type="entry name" value="UREASE ACCESSORY PROTEIN G"/>
    <property type="match status" value="1"/>
</dbReference>
<dbReference type="PANTHER" id="PTHR31715:SF0">
    <property type="entry name" value="UREASE ACCESSORY PROTEIN G"/>
    <property type="match status" value="1"/>
</dbReference>
<dbReference type="Pfam" id="PF02492">
    <property type="entry name" value="cobW"/>
    <property type="match status" value="1"/>
</dbReference>
<dbReference type="PIRSF" id="PIRSF005624">
    <property type="entry name" value="Ni-bind_GTPase"/>
    <property type="match status" value="1"/>
</dbReference>
<dbReference type="SUPFAM" id="SSF52540">
    <property type="entry name" value="P-loop containing nucleoside triphosphate hydrolases"/>
    <property type="match status" value="1"/>
</dbReference>
<evidence type="ECO:0000255" key="1">
    <source>
        <dbReference type="HAMAP-Rule" id="MF_01389"/>
    </source>
</evidence>
<reference key="1">
    <citation type="journal article" date="2004" name="Nat. Biotechnol.">
        <title>Complete sequence and comparative genome analysis of the dairy bacterium Streptococcus thermophilus.</title>
        <authorList>
            <person name="Bolotin A."/>
            <person name="Quinquis B."/>
            <person name="Renault P."/>
            <person name="Sorokin A."/>
            <person name="Ehrlich S.D."/>
            <person name="Kulakauskas S."/>
            <person name="Lapidus A."/>
            <person name="Goltsman E."/>
            <person name="Mazur M."/>
            <person name="Pusch G.D."/>
            <person name="Fonstein M."/>
            <person name="Overbeek R."/>
            <person name="Kyprides N."/>
            <person name="Purnelle B."/>
            <person name="Prozzi D."/>
            <person name="Ngui K."/>
            <person name="Masuy D."/>
            <person name="Hancy F."/>
            <person name="Burteau S."/>
            <person name="Boutry M."/>
            <person name="Delcour J."/>
            <person name="Goffeau A."/>
            <person name="Hols P."/>
        </authorList>
    </citation>
    <scope>NUCLEOTIDE SEQUENCE [LARGE SCALE GENOMIC DNA]</scope>
    <source>
        <strain>ATCC BAA-250 / LMG 18311</strain>
    </source>
</reference>
<feature type="chain" id="PRO_1000145240" description="Urease accessory protein UreG">
    <location>
        <begin position="1"/>
        <end position="204"/>
    </location>
</feature>
<feature type="binding site" evidence="1">
    <location>
        <begin position="12"/>
        <end position="19"/>
    </location>
    <ligand>
        <name>GTP</name>
        <dbReference type="ChEBI" id="CHEBI:37565"/>
    </ligand>
</feature>
<keyword id="KW-0143">Chaperone</keyword>
<keyword id="KW-0963">Cytoplasm</keyword>
<keyword id="KW-0342">GTP-binding</keyword>
<keyword id="KW-0996">Nickel insertion</keyword>
<keyword id="KW-0547">Nucleotide-binding</keyword>
<keyword id="KW-1185">Reference proteome</keyword>
<protein>
    <recommendedName>
        <fullName evidence="1">Urease accessory protein UreG</fullName>
    </recommendedName>
</protein>
<gene>
    <name evidence="1" type="primary">ureG</name>
    <name type="ordered locus">stu0286</name>
</gene>
<name>UREG_STRT2</name>
<accession>Q5M604</accession>
<proteinExistence type="inferred from homology"/>
<sequence>MTKRTVIIGVGGPVGSGKTLLLERLTRRMSDLNLAVITNDIYTKEDALFLAKNSSLDEDRIIGVETGGCPHTAIREDASMNFEAIETLQERFNHDLDVIFLESGGDNLAATFSPDLVDFTIYIIDVAQGEKIPRKAGQGMIKSDLFLINKTDLAPYVGANLDRMREDTLHFRNEDSFIFTNLNNDDNVKEVEEWIRKNFLLEDL</sequence>
<comment type="function">
    <text evidence="1">Facilitates the functional incorporation of the urease nickel metallocenter. This process requires GTP hydrolysis, probably effectuated by UreG.</text>
</comment>
<comment type="subunit">
    <text evidence="1">Homodimer. UreD, UreF and UreG form a complex that acts as a GTP-hydrolysis-dependent molecular chaperone, activating the urease apoprotein by helping to assemble the nickel containing metallocenter of UreC. The UreE protein probably delivers the nickel.</text>
</comment>
<comment type="subcellular location">
    <subcellularLocation>
        <location evidence="1">Cytoplasm</location>
    </subcellularLocation>
</comment>
<comment type="similarity">
    <text evidence="1">Belongs to the SIMIBI class G3E GTPase family. UreG subfamily.</text>
</comment>
<organism>
    <name type="scientific">Streptococcus thermophilus (strain ATCC BAA-250 / LMG 18311)</name>
    <dbReference type="NCBI Taxonomy" id="264199"/>
    <lineage>
        <taxon>Bacteria</taxon>
        <taxon>Bacillati</taxon>
        <taxon>Bacillota</taxon>
        <taxon>Bacilli</taxon>
        <taxon>Lactobacillales</taxon>
        <taxon>Streptococcaceae</taxon>
        <taxon>Streptococcus</taxon>
    </lineage>
</organism>